<feature type="chain" id="PRO_1000068800" description="Formate--tetrahydrofolate ligase">
    <location>
        <begin position="1"/>
        <end position="582"/>
    </location>
</feature>
<feature type="binding site" evidence="1">
    <location>
        <begin position="65"/>
        <end position="72"/>
    </location>
    <ligand>
        <name>ATP</name>
        <dbReference type="ChEBI" id="CHEBI:30616"/>
    </ligand>
</feature>
<accession>A7N5E9</accession>
<proteinExistence type="inferred from homology"/>
<sequence length="582" mass="62330">MQSDIEICRNTPLSSIATVAANAGLLPHELDTHGKHKAKVHPQCLERLTDNQDGKLVLVTAITPTPLGEGKTVTTIGLSQGLSKINQSVMACIRQPSMGPVFGVKGGAAGGGYSQVAPMDELNLHLTGDIHAVTAAHNLASAALDARLYHEQREGYDAFEARTSLRALKIDVERITWKRVMDHNDRALRMVKIGLNEEGKNINGFEREEGFDISAASELMAILALANDLKDLRQRIGRIVVAYDLNGNPVTTEDLQVAGAMAVTLKETIAPTLMQTLEGVPTLIHAGPFANIAHGNSSIIADQIALKLSSYVVTEAGFGSDMGFEKACNIKALAADRAPDCVVIVATLRGLKANSGHYDLRPGMAIPDSIFNPDQAALEAGFENLKWHINNVHKYGIPAVVAINQFPQDSGQELAELKALIERFNPEVKVAVSTVFAQGGEGAIELAQHVVETCEQGAQFRPLYTKKQSLKEKLMAVCEVGYGASNIEMSELAKQQLAHFEKLGFDDLAVCIAKTPLSITTDSAIKGAPSGFAVPIRELRLCAGAGFVYALSGNVMTMPGLPDKPTFMNLDLDDQGNIIGLS</sequence>
<gene>
    <name evidence="1" type="primary">fhs</name>
    <name type="ordered locus">VIBHAR_05943</name>
</gene>
<comment type="catalytic activity">
    <reaction evidence="1">
        <text>(6S)-5,6,7,8-tetrahydrofolate + formate + ATP = (6R)-10-formyltetrahydrofolate + ADP + phosphate</text>
        <dbReference type="Rhea" id="RHEA:20221"/>
        <dbReference type="ChEBI" id="CHEBI:15740"/>
        <dbReference type="ChEBI" id="CHEBI:30616"/>
        <dbReference type="ChEBI" id="CHEBI:43474"/>
        <dbReference type="ChEBI" id="CHEBI:57453"/>
        <dbReference type="ChEBI" id="CHEBI:195366"/>
        <dbReference type="ChEBI" id="CHEBI:456216"/>
        <dbReference type="EC" id="6.3.4.3"/>
    </reaction>
</comment>
<comment type="pathway">
    <text evidence="1">One-carbon metabolism; tetrahydrofolate interconversion.</text>
</comment>
<comment type="similarity">
    <text evidence="1">Belongs to the formate--tetrahydrofolate ligase family.</text>
</comment>
<name>FTHS_VIBC1</name>
<evidence type="ECO:0000255" key="1">
    <source>
        <dbReference type="HAMAP-Rule" id="MF_01543"/>
    </source>
</evidence>
<organism>
    <name type="scientific">Vibrio campbellii (strain ATCC BAA-1116)</name>
    <dbReference type="NCBI Taxonomy" id="2902295"/>
    <lineage>
        <taxon>Bacteria</taxon>
        <taxon>Pseudomonadati</taxon>
        <taxon>Pseudomonadota</taxon>
        <taxon>Gammaproteobacteria</taxon>
        <taxon>Vibrionales</taxon>
        <taxon>Vibrionaceae</taxon>
        <taxon>Vibrio</taxon>
    </lineage>
</organism>
<dbReference type="EC" id="6.3.4.3" evidence="1"/>
<dbReference type="EMBL" id="CP000790">
    <property type="protein sequence ID" value="ABU73836.1"/>
    <property type="molecule type" value="Genomic_DNA"/>
</dbReference>
<dbReference type="RefSeq" id="WP_012129485.1">
    <property type="nucleotide sequence ID" value="NC_009784.1"/>
</dbReference>
<dbReference type="SMR" id="A7N5E9"/>
<dbReference type="KEGG" id="vha:VIBHAR_05943"/>
<dbReference type="PATRIC" id="fig|338187.25.peg.4351"/>
<dbReference type="UniPathway" id="UPA00193"/>
<dbReference type="Proteomes" id="UP000008152">
    <property type="component" value="Chromosome II"/>
</dbReference>
<dbReference type="GO" id="GO:0005524">
    <property type="term" value="F:ATP binding"/>
    <property type="evidence" value="ECO:0007669"/>
    <property type="project" value="UniProtKB-UniRule"/>
</dbReference>
<dbReference type="GO" id="GO:0004329">
    <property type="term" value="F:formate-tetrahydrofolate ligase activity"/>
    <property type="evidence" value="ECO:0007669"/>
    <property type="project" value="UniProtKB-UniRule"/>
</dbReference>
<dbReference type="GO" id="GO:0035999">
    <property type="term" value="P:tetrahydrofolate interconversion"/>
    <property type="evidence" value="ECO:0007669"/>
    <property type="project" value="UniProtKB-UniRule"/>
</dbReference>
<dbReference type="CDD" id="cd00477">
    <property type="entry name" value="FTHFS"/>
    <property type="match status" value="1"/>
</dbReference>
<dbReference type="FunFam" id="3.30.1510.10:FF:000001">
    <property type="entry name" value="Formate--tetrahydrofolate ligase"/>
    <property type="match status" value="1"/>
</dbReference>
<dbReference type="FunFam" id="3.10.410.10:FF:000001">
    <property type="entry name" value="Putative formate--tetrahydrofolate ligase"/>
    <property type="match status" value="1"/>
</dbReference>
<dbReference type="Gene3D" id="3.30.1510.10">
    <property type="entry name" value="Domain 2, N(10)-formyltetrahydrofolate synthetase"/>
    <property type="match status" value="1"/>
</dbReference>
<dbReference type="Gene3D" id="3.10.410.10">
    <property type="entry name" value="Formyltetrahydrofolate synthetase, domain 3"/>
    <property type="match status" value="1"/>
</dbReference>
<dbReference type="Gene3D" id="3.40.50.300">
    <property type="entry name" value="P-loop containing nucleotide triphosphate hydrolases"/>
    <property type="match status" value="1"/>
</dbReference>
<dbReference type="HAMAP" id="MF_01543">
    <property type="entry name" value="FTHFS"/>
    <property type="match status" value="1"/>
</dbReference>
<dbReference type="InterPro" id="IPR000559">
    <property type="entry name" value="Formate_THF_ligase"/>
</dbReference>
<dbReference type="InterPro" id="IPR020628">
    <property type="entry name" value="Formate_THF_ligase_CS"/>
</dbReference>
<dbReference type="InterPro" id="IPR027417">
    <property type="entry name" value="P-loop_NTPase"/>
</dbReference>
<dbReference type="NCBIfam" id="NF010030">
    <property type="entry name" value="PRK13505.1"/>
    <property type="match status" value="1"/>
</dbReference>
<dbReference type="NCBIfam" id="NF010031">
    <property type="entry name" value="PRK13506.1"/>
    <property type="match status" value="1"/>
</dbReference>
<dbReference type="Pfam" id="PF01268">
    <property type="entry name" value="FTHFS"/>
    <property type="match status" value="1"/>
</dbReference>
<dbReference type="SUPFAM" id="SSF52540">
    <property type="entry name" value="P-loop containing nucleoside triphosphate hydrolases"/>
    <property type="match status" value="1"/>
</dbReference>
<dbReference type="PROSITE" id="PS00721">
    <property type="entry name" value="FTHFS_1"/>
    <property type="match status" value="1"/>
</dbReference>
<dbReference type="PROSITE" id="PS00722">
    <property type="entry name" value="FTHFS_2"/>
    <property type="match status" value="1"/>
</dbReference>
<reference key="1">
    <citation type="submission" date="2007-08" db="EMBL/GenBank/DDBJ databases">
        <authorList>
            <consortium name="The Vibrio harveyi Genome Sequencing Project"/>
            <person name="Bassler B."/>
            <person name="Clifton S.W."/>
            <person name="Fulton L."/>
            <person name="Delehaunty K."/>
            <person name="Fronick C."/>
            <person name="Harrison M."/>
            <person name="Markivic C."/>
            <person name="Fulton R."/>
            <person name="Tin-Wollam A.-M."/>
            <person name="Shah N."/>
            <person name="Pepin K."/>
            <person name="Nash W."/>
            <person name="Thiruvilangam P."/>
            <person name="Bhonagiri V."/>
            <person name="Waters C."/>
            <person name="Tu K.C."/>
            <person name="Irgon J."/>
            <person name="Wilson R.K."/>
        </authorList>
    </citation>
    <scope>NUCLEOTIDE SEQUENCE [LARGE SCALE GENOMIC DNA]</scope>
    <source>
        <strain>ATCC BAA-1116 / BB120</strain>
    </source>
</reference>
<keyword id="KW-0067">ATP-binding</keyword>
<keyword id="KW-0436">Ligase</keyword>
<keyword id="KW-0547">Nucleotide-binding</keyword>
<keyword id="KW-0554">One-carbon metabolism</keyword>
<protein>
    <recommendedName>
        <fullName evidence="1">Formate--tetrahydrofolate ligase</fullName>
        <ecNumber evidence="1">6.3.4.3</ecNumber>
    </recommendedName>
    <alternativeName>
        <fullName evidence="1">Formyltetrahydrofolate synthetase</fullName>
        <shortName evidence="1">FHS</shortName>
        <shortName evidence="1">FTHFS</shortName>
    </alternativeName>
</protein>